<gene>
    <name evidence="1" type="primary">gatA</name>
    <name type="ordered locus">AZOSEA17080</name>
    <name type="ORF">ebA3030</name>
</gene>
<protein>
    <recommendedName>
        <fullName evidence="1">Glutamyl-tRNA(Gln) amidotransferase subunit A</fullName>
        <shortName evidence="1">Glu-ADT subunit A</shortName>
        <ecNumber evidence="1">6.3.5.7</ecNumber>
    </recommendedName>
</protein>
<comment type="function">
    <text evidence="1">Allows the formation of correctly charged Gln-tRNA(Gln) through the transamidation of misacylated Glu-tRNA(Gln) in organisms which lack glutaminyl-tRNA synthetase. The reaction takes place in the presence of glutamine and ATP through an activated gamma-phospho-Glu-tRNA(Gln).</text>
</comment>
<comment type="catalytic activity">
    <reaction evidence="1">
        <text>L-glutamyl-tRNA(Gln) + L-glutamine + ATP + H2O = L-glutaminyl-tRNA(Gln) + L-glutamate + ADP + phosphate + H(+)</text>
        <dbReference type="Rhea" id="RHEA:17521"/>
        <dbReference type="Rhea" id="RHEA-COMP:9681"/>
        <dbReference type="Rhea" id="RHEA-COMP:9684"/>
        <dbReference type="ChEBI" id="CHEBI:15377"/>
        <dbReference type="ChEBI" id="CHEBI:15378"/>
        <dbReference type="ChEBI" id="CHEBI:29985"/>
        <dbReference type="ChEBI" id="CHEBI:30616"/>
        <dbReference type="ChEBI" id="CHEBI:43474"/>
        <dbReference type="ChEBI" id="CHEBI:58359"/>
        <dbReference type="ChEBI" id="CHEBI:78520"/>
        <dbReference type="ChEBI" id="CHEBI:78521"/>
        <dbReference type="ChEBI" id="CHEBI:456216"/>
        <dbReference type="EC" id="6.3.5.7"/>
    </reaction>
</comment>
<comment type="subunit">
    <text evidence="1">Heterotrimer of A, B and C subunits.</text>
</comment>
<comment type="similarity">
    <text evidence="1">Belongs to the amidase family. GatA subfamily.</text>
</comment>
<accession>Q5P4D0</accession>
<keyword id="KW-0067">ATP-binding</keyword>
<keyword id="KW-0436">Ligase</keyword>
<keyword id="KW-0547">Nucleotide-binding</keyword>
<keyword id="KW-0648">Protein biosynthesis</keyword>
<keyword id="KW-1185">Reference proteome</keyword>
<feature type="chain" id="PRO_0000241067" description="Glutamyl-tRNA(Gln) amidotransferase subunit A">
    <location>
        <begin position="1"/>
        <end position="490"/>
    </location>
</feature>
<feature type="active site" description="Charge relay system" evidence="1">
    <location>
        <position position="76"/>
    </location>
</feature>
<feature type="active site" description="Charge relay system" evidence="1">
    <location>
        <position position="151"/>
    </location>
</feature>
<feature type="active site" description="Acyl-ester intermediate" evidence="1">
    <location>
        <position position="175"/>
    </location>
</feature>
<evidence type="ECO:0000255" key="1">
    <source>
        <dbReference type="HAMAP-Rule" id="MF_00120"/>
    </source>
</evidence>
<sequence>MINASLTELRAALDARKISSVELATLFLDRIERLDASLNAFITVDRDGALEAARAADARIAAGDAGPLTGIPLAHKDVFCTEGVLTTCGSKMLANFVSPYDAHVVSLLKTAGAVSLGKTNMDEFAMGSSNENSHFGPAKNPWDTTRIPGGSSGGSAAAVAARLVPIATGTDTGGSVRQPAALTGVTGIKPTYGVVSRYGMIAYASSLDQGGAFGASAADCAQLLTAMAGFDPRDSTSLERPAEDYSRELAAPAAARPLAGLRIGLPKEFFGAGMADDVRAAVEAALDGYRALGATTVDVSLPNAQLAIPAYYVIAPAEASSNLSRFDGVRYGHRAAEYRDLAEMYSKSRAEGFGAEVKRRILVGTYVLSHGYYDAYYLQAQKLRRLIAQDFQAALAGCDVIAGPTSPTTAWTIGEKSDDPVQMYLSDIYTIAVNLAGLPGLSHPCGFGAGELPVGLQLVGDYFSEARLLNAAHRFQQASDWHLRRPAIAA</sequence>
<proteinExistence type="inferred from homology"/>
<reference key="1">
    <citation type="journal article" date="2005" name="Arch. Microbiol.">
        <title>The genome sequence of an anaerobic aromatic-degrading denitrifying bacterium, strain EbN1.</title>
        <authorList>
            <person name="Rabus R."/>
            <person name="Kube M."/>
            <person name="Heider J."/>
            <person name="Beck A."/>
            <person name="Heitmann K."/>
            <person name="Widdel F."/>
            <person name="Reinhardt R."/>
        </authorList>
    </citation>
    <scope>NUCLEOTIDE SEQUENCE [LARGE SCALE GENOMIC DNA]</scope>
    <source>
        <strain>DSM 19018 / LMG 30748 / EbN1</strain>
    </source>
</reference>
<name>GATA_AROAE</name>
<organism>
    <name type="scientific">Aromatoleum aromaticum (strain DSM 19018 / LMG 30748 / EbN1)</name>
    <name type="common">Azoarcus sp. (strain EbN1)</name>
    <dbReference type="NCBI Taxonomy" id="76114"/>
    <lineage>
        <taxon>Bacteria</taxon>
        <taxon>Pseudomonadati</taxon>
        <taxon>Pseudomonadota</taxon>
        <taxon>Betaproteobacteria</taxon>
        <taxon>Rhodocyclales</taxon>
        <taxon>Rhodocyclaceae</taxon>
        <taxon>Aromatoleum</taxon>
    </lineage>
</organism>
<dbReference type="EC" id="6.3.5.7" evidence="1"/>
<dbReference type="EMBL" id="CR555306">
    <property type="protein sequence ID" value="CAI07833.1"/>
    <property type="molecule type" value="Genomic_DNA"/>
</dbReference>
<dbReference type="RefSeq" id="WP_011237547.1">
    <property type="nucleotide sequence ID" value="NC_006513.1"/>
</dbReference>
<dbReference type="SMR" id="Q5P4D0"/>
<dbReference type="STRING" id="76114.ebA3030"/>
<dbReference type="KEGG" id="eba:ebA3030"/>
<dbReference type="eggNOG" id="COG0154">
    <property type="taxonomic scope" value="Bacteria"/>
</dbReference>
<dbReference type="HOGENOM" id="CLU_009600_0_3_4"/>
<dbReference type="OrthoDB" id="9811471at2"/>
<dbReference type="Proteomes" id="UP000006552">
    <property type="component" value="Chromosome"/>
</dbReference>
<dbReference type="GO" id="GO:0030956">
    <property type="term" value="C:glutamyl-tRNA(Gln) amidotransferase complex"/>
    <property type="evidence" value="ECO:0007669"/>
    <property type="project" value="InterPro"/>
</dbReference>
<dbReference type="GO" id="GO:0005524">
    <property type="term" value="F:ATP binding"/>
    <property type="evidence" value="ECO:0007669"/>
    <property type="project" value="UniProtKB-KW"/>
</dbReference>
<dbReference type="GO" id="GO:0050567">
    <property type="term" value="F:glutaminyl-tRNA synthase (glutamine-hydrolyzing) activity"/>
    <property type="evidence" value="ECO:0007669"/>
    <property type="project" value="UniProtKB-UniRule"/>
</dbReference>
<dbReference type="GO" id="GO:0006412">
    <property type="term" value="P:translation"/>
    <property type="evidence" value="ECO:0007669"/>
    <property type="project" value="UniProtKB-UniRule"/>
</dbReference>
<dbReference type="Gene3D" id="3.90.1300.10">
    <property type="entry name" value="Amidase signature (AS) domain"/>
    <property type="match status" value="1"/>
</dbReference>
<dbReference type="HAMAP" id="MF_00120">
    <property type="entry name" value="GatA"/>
    <property type="match status" value="1"/>
</dbReference>
<dbReference type="InterPro" id="IPR000120">
    <property type="entry name" value="Amidase"/>
</dbReference>
<dbReference type="InterPro" id="IPR020556">
    <property type="entry name" value="Amidase_CS"/>
</dbReference>
<dbReference type="InterPro" id="IPR023631">
    <property type="entry name" value="Amidase_dom"/>
</dbReference>
<dbReference type="InterPro" id="IPR036928">
    <property type="entry name" value="AS_sf"/>
</dbReference>
<dbReference type="InterPro" id="IPR004412">
    <property type="entry name" value="GatA"/>
</dbReference>
<dbReference type="NCBIfam" id="TIGR00132">
    <property type="entry name" value="gatA"/>
    <property type="match status" value="1"/>
</dbReference>
<dbReference type="PANTHER" id="PTHR11895:SF151">
    <property type="entry name" value="GLUTAMYL-TRNA(GLN) AMIDOTRANSFERASE SUBUNIT A"/>
    <property type="match status" value="1"/>
</dbReference>
<dbReference type="PANTHER" id="PTHR11895">
    <property type="entry name" value="TRANSAMIDASE"/>
    <property type="match status" value="1"/>
</dbReference>
<dbReference type="Pfam" id="PF01425">
    <property type="entry name" value="Amidase"/>
    <property type="match status" value="1"/>
</dbReference>
<dbReference type="SUPFAM" id="SSF75304">
    <property type="entry name" value="Amidase signature (AS) enzymes"/>
    <property type="match status" value="1"/>
</dbReference>
<dbReference type="PROSITE" id="PS00571">
    <property type="entry name" value="AMIDASES"/>
    <property type="match status" value="1"/>
</dbReference>